<accession>O14311</accession>
<gene>
    <name type="primary">spt3</name>
    <name type="ORF">SPCC61.02</name>
</gene>
<reference key="1">
    <citation type="journal article" date="1998" name="Yeast">
        <title>Identification and analysis of homologues of Saccharomyces cerevisiae Spt3 suggest conserved functional domains.</title>
        <authorList>
            <person name="Madison J.M."/>
            <person name="Winston F."/>
        </authorList>
    </citation>
    <scope>NUCLEOTIDE SEQUENCE [GENOMIC DNA]</scope>
    <scope>FUNCTION</scope>
    <scope>SUBCELLULAR LOCATION</scope>
</reference>
<reference key="2">
    <citation type="journal article" date="2002" name="Nature">
        <title>The genome sequence of Schizosaccharomyces pombe.</title>
        <authorList>
            <person name="Wood V."/>
            <person name="Gwilliam R."/>
            <person name="Rajandream M.A."/>
            <person name="Lyne M.H."/>
            <person name="Lyne R."/>
            <person name="Stewart A."/>
            <person name="Sgouros J.G."/>
            <person name="Peat N."/>
            <person name="Hayles J."/>
            <person name="Baker S.G."/>
            <person name="Basham D."/>
            <person name="Bowman S."/>
            <person name="Brooks K."/>
            <person name="Brown D."/>
            <person name="Brown S."/>
            <person name="Chillingworth T."/>
            <person name="Churcher C.M."/>
            <person name="Collins M."/>
            <person name="Connor R."/>
            <person name="Cronin A."/>
            <person name="Davis P."/>
            <person name="Feltwell T."/>
            <person name="Fraser A."/>
            <person name="Gentles S."/>
            <person name="Goble A."/>
            <person name="Hamlin N."/>
            <person name="Harris D.E."/>
            <person name="Hidalgo J."/>
            <person name="Hodgson G."/>
            <person name="Holroyd S."/>
            <person name="Hornsby T."/>
            <person name="Howarth S."/>
            <person name="Huckle E.J."/>
            <person name="Hunt S."/>
            <person name="Jagels K."/>
            <person name="James K.D."/>
            <person name="Jones L."/>
            <person name="Jones M."/>
            <person name="Leather S."/>
            <person name="McDonald S."/>
            <person name="McLean J."/>
            <person name="Mooney P."/>
            <person name="Moule S."/>
            <person name="Mungall K.L."/>
            <person name="Murphy L.D."/>
            <person name="Niblett D."/>
            <person name="Odell C."/>
            <person name="Oliver K."/>
            <person name="O'Neil S."/>
            <person name="Pearson D."/>
            <person name="Quail M.A."/>
            <person name="Rabbinowitsch E."/>
            <person name="Rutherford K.M."/>
            <person name="Rutter S."/>
            <person name="Saunders D."/>
            <person name="Seeger K."/>
            <person name="Sharp S."/>
            <person name="Skelton J."/>
            <person name="Simmonds M.N."/>
            <person name="Squares R."/>
            <person name="Squares S."/>
            <person name="Stevens K."/>
            <person name="Taylor K."/>
            <person name="Taylor R.G."/>
            <person name="Tivey A."/>
            <person name="Walsh S.V."/>
            <person name="Warren T."/>
            <person name="Whitehead S."/>
            <person name="Woodward J.R."/>
            <person name="Volckaert G."/>
            <person name="Aert R."/>
            <person name="Robben J."/>
            <person name="Grymonprez B."/>
            <person name="Weltjens I."/>
            <person name="Vanstreels E."/>
            <person name="Rieger M."/>
            <person name="Schaefer M."/>
            <person name="Mueller-Auer S."/>
            <person name="Gabel C."/>
            <person name="Fuchs M."/>
            <person name="Duesterhoeft A."/>
            <person name="Fritzc C."/>
            <person name="Holzer E."/>
            <person name="Moestl D."/>
            <person name="Hilbert H."/>
            <person name="Borzym K."/>
            <person name="Langer I."/>
            <person name="Beck A."/>
            <person name="Lehrach H."/>
            <person name="Reinhardt R."/>
            <person name="Pohl T.M."/>
            <person name="Eger P."/>
            <person name="Zimmermann W."/>
            <person name="Wedler H."/>
            <person name="Wambutt R."/>
            <person name="Purnelle B."/>
            <person name="Goffeau A."/>
            <person name="Cadieu E."/>
            <person name="Dreano S."/>
            <person name="Gloux S."/>
            <person name="Lelaure V."/>
            <person name="Mottier S."/>
            <person name="Galibert F."/>
            <person name="Aves S.J."/>
            <person name="Xiang Z."/>
            <person name="Hunt C."/>
            <person name="Moore K."/>
            <person name="Hurst S.M."/>
            <person name="Lucas M."/>
            <person name="Rochet M."/>
            <person name="Gaillardin C."/>
            <person name="Tallada V.A."/>
            <person name="Garzon A."/>
            <person name="Thode G."/>
            <person name="Daga R.R."/>
            <person name="Cruzado L."/>
            <person name="Jimenez J."/>
            <person name="Sanchez M."/>
            <person name="del Rey F."/>
            <person name="Benito J."/>
            <person name="Dominguez A."/>
            <person name="Revuelta J.L."/>
            <person name="Moreno S."/>
            <person name="Armstrong J."/>
            <person name="Forsburg S.L."/>
            <person name="Cerutti L."/>
            <person name="Lowe T."/>
            <person name="McCombie W.R."/>
            <person name="Paulsen I."/>
            <person name="Potashkin J."/>
            <person name="Shpakovski G.V."/>
            <person name="Ussery D."/>
            <person name="Barrell B.G."/>
            <person name="Nurse P."/>
        </authorList>
    </citation>
    <scope>NUCLEOTIDE SEQUENCE [LARGE SCALE GENOMIC DNA]</scope>
    <source>
        <strain>972 / ATCC 24843</strain>
    </source>
</reference>
<reference key="3">
    <citation type="journal article" date="2008" name="Genes Dev.">
        <title>The S. pombe SAGA complex controls the switch from proliferation to sexual differentiation through the opposing roles of its subunits Gcn5 and Spt8.</title>
        <authorList>
            <person name="Helmlinger D."/>
            <person name="Marguerat S."/>
            <person name="Villen J."/>
            <person name="Gygi S.P."/>
            <person name="Bahler J."/>
            <person name="Winston F."/>
        </authorList>
    </citation>
    <scope>IDENTIFICATION IN THE SAGA COMPLEX</scope>
    <scope>IDENTIFICATION BY MASS SPECTROMETRY</scope>
</reference>
<proteinExistence type="evidence at protein level"/>
<organism>
    <name type="scientific">Schizosaccharomyces pombe (strain 972 / ATCC 24843)</name>
    <name type="common">Fission yeast</name>
    <dbReference type="NCBI Taxonomy" id="284812"/>
    <lineage>
        <taxon>Eukaryota</taxon>
        <taxon>Fungi</taxon>
        <taxon>Dikarya</taxon>
        <taxon>Ascomycota</taxon>
        <taxon>Taphrinomycotina</taxon>
        <taxon>Schizosaccharomycetes</taxon>
        <taxon>Schizosaccharomycetales</taxon>
        <taxon>Schizosaccharomycetaceae</taxon>
        <taxon>Schizosaccharomyces</taxon>
    </lineage>
</organism>
<comment type="function">
    <text evidence="1 3">Component of the transcription coactivator SAGA complex. SAGA acts as a general cofactor required for essentially all RNA polymerase II transcription. At the promoters, SAGA is required for transcription pre-initiation complex (PIC) recruitment. It influences RNA polymerase II transcriptional activity through different activities such as TBP interaction (via core/TAF module) and promoter selectivity, interaction with transcription activators (via Tra1/SPT module), and chromatin modification through histone acetylation (via HAT module) and deubiquitination (via DUB module). SAGA preferentially acetylates histones H3 (to form H3K9ac, H3K14ac, H3K18ac and H3K23ac) and H2B and deubiquitinates histone H2B. SAGA interacts with DNA via upstream activating sequences (UASs). Spt3 is required for recruitment of TATA-binding protein (TBP) to SAGA-dependent promoters. During SAGA-mediated transcriptional inhibition, spt3 and spt8 prevent binding of TBP to the TATA box (By similarity). SPT factors 3, 7 and 8 are required for the initiation of Ty transcription from the delta promoter. Spt3 regulates Ty1 as well as the mating factor genes (PubMed:9559549).</text>
</comment>
<comment type="subunit">
    <text evidence="1 2">Component of the 1.8 MDa SAGA (Spt-Ada-Gcn5 acetyltransferase) complex, which is composed of 19 subunits tra1, spt7, taf5, ngg1/ada3, sgf73, spt20, spt8, taf12, taf6, hfi1/ada1, ubp8, gcn5, ada2, spt3, sgf29, taf10, taf9, sgf11 and sus1 (PubMed:19056896). The SAGA complex is composed of 4 modules, namely the HAT (histone acetyltransferase) module (gcn5, ada2, ngg1/ada3 and sgf29), the DUB (deubiquitinating) module (ubp8, sgf11, sgf73 and sus1), the core or TAF (TBP-associated factor) module (taf5, taf6, taf9, taf10 and taf12), and the Tra1 or SPT (Suppressor of Ty) module (tra1, hfi1/ada1, spt3, spt7, spt8 and spt20). The Tra1/SPT module binds activators, the core module recruits TBP (TATA-binding protein), the HAT module contains the histone H3 acetyltransferase gcn5, and the DUB module comprises the histone H2B deubiquitinase ubp8 (By similarity).</text>
</comment>
<comment type="subcellular location">
    <subcellularLocation>
        <location evidence="3">Nucleus</location>
    </subcellularLocation>
</comment>
<comment type="similarity">
    <text evidence="4">Belongs to the SPT3 family.</text>
</comment>
<sequence>MTETGRTSKYRVEIQQMMFILGEVQDPLPETTQLVEELIRGQVMEMLIQANELALRRGSRSITVEDLFFLIRHDRAKVNRLKTYLSWKEVRKKAKEQDANPADTKDLFEEVDSKTRSMNAVAMPWEVKNMFTEPVPETEEFEEDNDTMEMAYATRQRLKMADERTKKMTREEYVHWSECRQASFTYRKGKRFREWCGMSILTDTRPDNDIVDILGFLTFEIVATLTEEALAVKDRMDRIQNSSGSGGSHAAHHPKNCSLFDGLTEGRTPLQVSHVLEAFRRLQIPDKTHTAMRSFHGGLVKSRVYLI</sequence>
<evidence type="ECO:0000250" key="1">
    <source>
        <dbReference type="UniProtKB" id="P06844"/>
    </source>
</evidence>
<evidence type="ECO:0000269" key="2">
    <source>
    </source>
</evidence>
<evidence type="ECO:0000269" key="3">
    <source>
    </source>
</evidence>
<evidence type="ECO:0000305" key="4"/>
<feature type="chain" id="PRO_0000072165" description="SAGA complex subunit Spt3">
    <location>
        <begin position="1"/>
        <end position="307"/>
    </location>
</feature>
<feature type="sequence conflict" description="In Ref. 1; AAC49995." evidence="4" ref="1">
    <original>A</original>
    <variation>R</variation>
    <location>
        <position position="102"/>
    </location>
</feature>
<name>SPT3_SCHPO</name>
<dbReference type="EMBL" id="AF005931">
    <property type="protein sequence ID" value="AAC49995.1"/>
    <property type="molecule type" value="Genomic_DNA"/>
</dbReference>
<dbReference type="EMBL" id="CU329672">
    <property type="protein sequence ID" value="CAA22271.1"/>
    <property type="molecule type" value="Genomic_DNA"/>
</dbReference>
<dbReference type="PIR" id="T41462">
    <property type="entry name" value="T41462"/>
</dbReference>
<dbReference type="RefSeq" id="NP_588193.1">
    <property type="nucleotide sequence ID" value="NM_001023183.2"/>
</dbReference>
<dbReference type="SMR" id="O14311"/>
<dbReference type="BioGRID" id="276130">
    <property type="interactions" value="7"/>
</dbReference>
<dbReference type="FunCoup" id="O14311">
    <property type="interactions" value="86"/>
</dbReference>
<dbReference type="IntAct" id="O14311">
    <property type="interactions" value="2"/>
</dbReference>
<dbReference type="MINT" id="O14311"/>
<dbReference type="STRING" id="284812.O14311"/>
<dbReference type="PaxDb" id="4896-SPCC61.02.1"/>
<dbReference type="EnsemblFungi" id="SPCC61.02.1">
    <property type="protein sequence ID" value="SPCC61.02.1:pep"/>
    <property type="gene ID" value="SPCC61.02"/>
</dbReference>
<dbReference type="GeneID" id="2539570"/>
<dbReference type="KEGG" id="spo:2539570"/>
<dbReference type="PomBase" id="SPCC61.02">
    <property type="gene designation" value="spt3"/>
</dbReference>
<dbReference type="VEuPathDB" id="FungiDB:SPCC61.02"/>
<dbReference type="eggNOG" id="KOG3902">
    <property type="taxonomic scope" value="Eukaryota"/>
</dbReference>
<dbReference type="HOGENOM" id="CLU_038706_1_1_1"/>
<dbReference type="InParanoid" id="O14311"/>
<dbReference type="OMA" id="QFMFNEQ"/>
<dbReference type="PhylomeDB" id="O14311"/>
<dbReference type="Reactome" id="R-SPO-674695">
    <property type="pathway name" value="RNA Polymerase II Pre-transcription Events"/>
</dbReference>
<dbReference type="Reactome" id="R-SPO-6807505">
    <property type="pathway name" value="RNA polymerase II transcribes snRNA genes"/>
</dbReference>
<dbReference type="Reactome" id="R-SPO-73776">
    <property type="pathway name" value="RNA Polymerase II Promoter Escape"/>
</dbReference>
<dbReference type="Reactome" id="R-SPO-73779">
    <property type="pathway name" value="RNA Polymerase II Transcription Pre-Initiation And Promoter Opening"/>
</dbReference>
<dbReference type="Reactome" id="R-SPO-75953">
    <property type="pathway name" value="RNA Polymerase II Transcription Initiation"/>
</dbReference>
<dbReference type="Reactome" id="R-SPO-76042">
    <property type="pathway name" value="RNA Polymerase II Transcription Initiation And Promoter Clearance"/>
</dbReference>
<dbReference type="PRO" id="PR:O14311"/>
<dbReference type="Proteomes" id="UP000002485">
    <property type="component" value="Chromosome III"/>
</dbReference>
<dbReference type="GO" id="GO:0005829">
    <property type="term" value="C:cytosol"/>
    <property type="evidence" value="ECO:0007005"/>
    <property type="project" value="PomBase"/>
</dbReference>
<dbReference type="GO" id="GO:0005634">
    <property type="term" value="C:nucleus"/>
    <property type="evidence" value="ECO:0007005"/>
    <property type="project" value="PomBase"/>
</dbReference>
<dbReference type="GO" id="GO:0000124">
    <property type="term" value="C:SAGA complex"/>
    <property type="evidence" value="ECO:0000314"/>
    <property type="project" value="PomBase"/>
</dbReference>
<dbReference type="GO" id="GO:0046982">
    <property type="term" value="F:protein heterodimerization activity"/>
    <property type="evidence" value="ECO:0007669"/>
    <property type="project" value="InterPro"/>
</dbReference>
<dbReference type="GO" id="GO:0003713">
    <property type="term" value="F:transcription coactivator activity"/>
    <property type="evidence" value="ECO:0000266"/>
    <property type="project" value="PomBase"/>
</dbReference>
<dbReference type="GO" id="GO:0003712">
    <property type="term" value="F:transcription coregulator activity"/>
    <property type="evidence" value="ECO:0000318"/>
    <property type="project" value="GO_Central"/>
</dbReference>
<dbReference type="GO" id="GO:0006357">
    <property type="term" value="P:regulation of transcription by RNA polymerase II"/>
    <property type="evidence" value="ECO:0000269"/>
    <property type="project" value="PomBase"/>
</dbReference>
<dbReference type="GO" id="GO:0045815">
    <property type="term" value="P:transcription initiation-coupled chromatin remodeling"/>
    <property type="evidence" value="ECO:0000305"/>
    <property type="project" value="PomBase"/>
</dbReference>
<dbReference type="CDD" id="cd22926">
    <property type="entry name" value="HFD_SPT3"/>
    <property type="match status" value="1"/>
</dbReference>
<dbReference type="FunFam" id="1.10.20.10:FF:000023">
    <property type="entry name" value="transcription initiation protein SPT3 homolog"/>
    <property type="match status" value="1"/>
</dbReference>
<dbReference type="Gene3D" id="1.10.20.10">
    <property type="entry name" value="Histone, subunit A"/>
    <property type="match status" value="1"/>
</dbReference>
<dbReference type="InterPro" id="IPR009072">
    <property type="entry name" value="Histone-fold"/>
</dbReference>
<dbReference type="InterPro" id="IPR003195">
    <property type="entry name" value="TFIID_TAF13"/>
</dbReference>
<dbReference type="PANTHER" id="PTHR11380">
    <property type="entry name" value="TRANSCRIPTION INITIATION FACTOR TFIID/SUPT3-RELATED"/>
    <property type="match status" value="1"/>
</dbReference>
<dbReference type="PANTHER" id="PTHR11380:SF16">
    <property type="entry name" value="TRANSCRIPTION INITIATION PROTEIN SPT3 HOMOLOG"/>
    <property type="match status" value="1"/>
</dbReference>
<dbReference type="Pfam" id="PF02269">
    <property type="entry name" value="TFIID-18kDa"/>
    <property type="match status" value="1"/>
</dbReference>
<dbReference type="SUPFAM" id="SSF47113">
    <property type="entry name" value="Histone-fold"/>
    <property type="match status" value="1"/>
</dbReference>
<protein>
    <recommendedName>
        <fullName>SAGA complex subunit Spt3</fullName>
    </recommendedName>
</protein>
<keyword id="KW-0010">Activator</keyword>
<keyword id="KW-0539">Nucleus</keyword>
<keyword id="KW-1185">Reference proteome</keyword>
<keyword id="KW-0804">Transcription</keyword>
<keyword id="KW-0805">Transcription regulation</keyword>